<gene>
    <name type="primary">efr3</name>
    <name type="ORF">SPCC794.08</name>
</gene>
<sequence length="798" mass="90383">MWLLFRSKHKKLVLRCFPSGKLGETEPNGSPLAYLSYYAASNSSKLRKVAHFLGSRVRHSYYHKRDNEVIIGLKICKTLVQKCRDNINVMASEVVNMLLVASSSKNLEVLSACVDCFATFCDNSGKGSPATFGNEFHSAFNNLVNSFFELSKGIDCVDPQQSKMLGLKAFHALTACKFAGTEGGMRYQPHFAIHCVLINSWSESDQEKKSFIDLVRSTAKSYKPLPPSSTGVSLPEHDEAGDNIDVAIKKLCIRILFNIYTQTDPLFMAESTKSLIHFFAAKSDTPVNLEYISVVLNQILDWTPVELRHSIFFCCLRCLSSSRIVNSETNVMVPYMIYSILNSKNSISGLSVIDVLRDLGSHLINAVNSFDADDQTWYNMCESPSEKLPRRLYLLLVCITCLTKHQYYDEEFADVWREIDTLANSETSSAIQMVALTAFHKLQNEKLNTKKESSAPLSLVTDFLLHSWPKSAERLHTSQSPFVRIKTAEVFYEFLCFLRPSLINFDTILRKSAITSFSVLWDFIYETSWHIERWLKVFSVQSEFYILKLIIQRLYQLYGPVSVTAVLPAMYRGLRPFENDPPRCIAEAVTAYYIIYIGENLKITTLQSSGRKWLDSLSSSLPSSLLNRGSSTHSWEKLTNASTEEVMLPLDMVVNELLEKSPKVFPEDSRLLFAEQSRHPKYTDIIQKLKKPSREKSFTSSSEYSLPFISPASDYQQNPLLHATKSLVSIHQQSQRGEMVSTLKQALSRPHTASTVVRSPSEINLTRQTSNRVPLLDMLNLNRAMSPTPIQSPPYVRT</sequence>
<reference key="1">
    <citation type="journal article" date="2002" name="Nature">
        <title>The genome sequence of Schizosaccharomyces pombe.</title>
        <authorList>
            <person name="Wood V."/>
            <person name="Gwilliam R."/>
            <person name="Rajandream M.A."/>
            <person name="Lyne M.H."/>
            <person name="Lyne R."/>
            <person name="Stewart A."/>
            <person name="Sgouros J.G."/>
            <person name="Peat N."/>
            <person name="Hayles J."/>
            <person name="Baker S.G."/>
            <person name="Basham D."/>
            <person name="Bowman S."/>
            <person name="Brooks K."/>
            <person name="Brown D."/>
            <person name="Brown S."/>
            <person name="Chillingworth T."/>
            <person name="Churcher C.M."/>
            <person name="Collins M."/>
            <person name="Connor R."/>
            <person name="Cronin A."/>
            <person name="Davis P."/>
            <person name="Feltwell T."/>
            <person name="Fraser A."/>
            <person name="Gentles S."/>
            <person name="Goble A."/>
            <person name="Hamlin N."/>
            <person name="Harris D.E."/>
            <person name="Hidalgo J."/>
            <person name="Hodgson G."/>
            <person name="Holroyd S."/>
            <person name="Hornsby T."/>
            <person name="Howarth S."/>
            <person name="Huckle E.J."/>
            <person name="Hunt S."/>
            <person name="Jagels K."/>
            <person name="James K.D."/>
            <person name="Jones L."/>
            <person name="Jones M."/>
            <person name="Leather S."/>
            <person name="McDonald S."/>
            <person name="McLean J."/>
            <person name="Mooney P."/>
            <person name="Moule S."/>
            <person name="Mungall K.L."/>
            <person name="Murphy L.D."/>
            <person name="Niblett D."/>
            <person name="Odell C."/>
            <person name="Oliver K."/>
            <person name="O'Neil S."/>
            <person name="Pearson D."/>
            <person name="Quail M.A."/>
            <person name="Rabbinowitsch E."/>
            <person name="Rutherford K.M."/>
            <person name="Rutter S."/>
            <person name="Saunders D."/>
            <person name="Seeger K."/>
            <person name="Sharp S."/>
            <person name="Skelton J."/>
            <person name="Simmonds M.N."/>
            <person name="Squares R."/>
            <person name="Squares S."/>
            <person name="Stevens K."/>
            <person name="Taylor K."/>
            <person name="Taylor R.G."/>
            <person name="Tivey A."/>
            <person name="Walsh S.V."/>
            <person name="Warren T."/>
            <person name="Whitehead S."/>
            <person name="Woodward J.R."/>
            <person name="Volckaert G."/>
            <person name="Aert R."/>
            <person name="Robben J."/>
            <person name="Grymonprez B."/>
            <person name="Weltjens I."/>
            <person name="Vanstreels E."/>
            <person name="Rieger M."/>
            <person name="Schaefer M."/>
            <person name="Mueller-Auer S."/>
            <person name="Gabel C."/>
            <person name="Fuchs M."/>
            <person name="Duesterhoeft A."/>
            <person name="Fritzc C."/>
            <person name="Holzer E."/>
            <person name="Moestl D."/>
            <person name="Hilbert H."/>
            <person name="Borzym K."/>
            <person name="Langer I."/>
            <person name="Beck A."/>
            <person name="Lehrach H."/>
            <person name="Reinhardt R."/>
            <person name="Pohl T.M."/>
            <person name="Eger P."/>
            <person name="Zimmermann W."/>
            <person name="Wedler H."/>
            <person name="Wambutt R."/>
            <person name="Purnelle B."/>
            <person name="Goffeau A."/>
            <person name="Cadieu E."/>
            <person name="Dreano S."/>
            <person name="Gloux S."/>
            <person name="Lelaure V."/>
            <person name="Mottier S."/>
            <person name="Galibert F."/>
            <person name="Aves S.J."/>
            <person name="Xiang Z."/>
            <person name="Hunt C."/>
            <person name="Moore K."/>
            <person name="Hurst S.M."/>
            <person name="Lucas M."/>
            <person name="Rochet M."/>
            <person name="Gaillardin C."/>
            <person name="Tallada V.A."/>
            <person name="Garzon A."/>
            <person name="Thode G."/>
            <person name="Daga R.R."/>
            <person name="Cruzado L."/>
            <person name="Jimenez J."/>
            <person name="Sanchez M."/>
            <person name="del Rey F."/>
            <person name="Benito J."/>
            <person name="Dominguez A."/>
            <person name="Revuelta J.L."/>
            <person name="Moreno S."/>
            <person name="Armstrong J."/>
            <person name="Forsburg S.L."/>
            <person name="Cerutti L."/>
            <person name="Lowe T."/>
            <person name="McCombie W.R."/>
            <person name="Paulsen I."/>
            <person name="Potashkin J."/>
            <person name="Shpakovski G.V."/>
            <person name="Ussery D."/>
            <person name="Barrell B.G."/>
            <person name="Nurse P."/>
        </authorList>
    </citation>
    <scope>NUCLEOTIDE SEQUENCE [LARGE SCALE GENOMIC DNA]</scope>
    <source>
        <strain>972 / ATCC 24843</strain>
    </source>
</reference>
<reference key="2">
    <citation type="journal article" date="2008" name="J. Proteome Res.">
        <title>Phosphoproteome analysis of fission yeast.</title>
        <authorList>
            <person name="Wilson-Grady J.T."/>
            <person name="Villen J."/>
            <person name="Gygi S.P."/>
        </authorList>
    </citation>
    <scope>PHOSPHORYLATION [LARGE SCALE ANALYSIS] AT SER-210; SER-726 AND SER-729</scope>
    <scope>IDENTIFICATION BY MASS SPECTROMETRY</scope>
</reference>
<protein>
    <recommendedName>
        <fullName>Protein efr3</fullName>
    </recommendedName>
</protein>
<feature type="chain" id="PRO_0000270783" description="Protein efr3">
    <location>
        <begin position="1"/>
        <end position="798"/>
    </location>
</feature>
<feature type="modified residue" description="Phosphoserine" evidence="1">
    <location>
        <position position="210"/>
    </location>
</feature>
<feature type="modified residue" description="Phosphoserine" evidence="1">
    <location>
        <position position="726"/>
    </location>
</feature>
<feature type="modified residue" description="Phosphoserine" evidence="1">
    <location>
        <position position="729"/>
    </location>
</feature>
<keyword id="KW-0597">Phosphoprotein</keyword>
<keyword id="KW-1185">Reference proteome</keyword>
<dbReference type="EMBL" id="CU329672">
    <property type="protein sequence ID" value="CAA19135.1"/>
    <property type="molecule type" value="Genomic_DNA"/>
</dbReference>
<dbReference type="PIR" id="T41616">
    <property type="entry name" value="T41616"/>
</dbReference>
<dbReference type="RefSeq" id="NP_587756.1">
    <property type="nucleotide sequence ID" value="NM_001022749.2"/>
</dbReference>
<dbReference type="SMR" id="O59817"/>
<dbReference type="BioGRID" id="275323">
    <property type="interactions" value="11"/>
</dbReference>
<dbReference type="FunCoup" id="O59817">
    <property type="interactions" value="2"/>
</dbReference>
<dbReference type="STRING" id="284812.O59817"/>
<dbReference type="iPTMnet" id="O59817"/>
<dbReference type="PaxDb" id="4896-SPCC794.08.1"/>
<dbReference type="EnsemblFungi" id="SPCC794.08.1">
    <property type="protein sequence ID" value="SPCC794.08.1:pep"/>
    <property type="gene ID" value="SPCC794.08"/>
</dbReference>
<dbReference type="GeneID" id="2538740"/>
<dbReference type="KEGG" id="spo:2538740"/>
<dbReference type="PomBase" id="SPCC794.08">
    <property type="gene designation" value="efr3"/>
</dbReference>
<dbReference type="VEuPathDB" id="FungiDB:SPCC794.08"/>
<dbReference type="eggNOG" id="KOG1877">
    <property type="taxonomic scope" value="Eukaryota"/>
</dbReference>
<dbReference type="HOGENOM" id="CLU_341680_0_0_1"/>
<dbReference type="InParanoid" id="O59817"/>
<dbReference type="OMA" id="RHSIFFC"/>
<dbReference type="PhylomeDB" id="O59817"/>
<dbReference type="PRO" id="PR:O59817"/>
<dbReference type="Proteomes" id="UP000002485">
    <property type="component" value="Chromosome III"/>
</dbReference>
<dbReference type="GO" id="GO:0005886">
    <property type="term" value="C:plasma membrane"/>
    <property type="evidence" value="ECO:0000314"/>
    <property type="project" value="PomBase"/>
</dbReference>
<dbReference type="GO" id="GO:1903475">
    <property type="term" value="P:mitotic actomyosin contractile ring assembly"/>
    <property type="evidence" value="ECO:0000315"/>
    <property type="project" value="PomBase"/>
</dbReference>
<dbReference type="GO" id="GO:0046854">
    <property type="term" value="P:phosphatidylinositol phosphate biosynthetic process"/>
    <property type="evidence" value="ECO:0000315"/>
    <property type="project" value="PomBase"/>
</dbReference>
<dbReference type="GO" id="GO:0007009">
    <property type="term" value="P:plasma membrane organization"/>
    <property type="evidence" value="ECO:0000315"/>
    <property type="project" value="PomBase"/>
</dbReference>
<dbReference type="GO" id="GO:0072659">
    <property type="term" value="P:protein localization to plasma membrane"/>
    <property type="evidence" value="ECO:0007669"/>
    <property type="project" value="InterPro"/>
</dbReference>
<dbReference type="InterPro" id="IPR016024">
    <property type="entry name" value="ARM-type_fold"/>
</dbReference>
<dbReference type="InterPro" id="IPR039786">
    <property type="entry name" value="EFR3"/>
</dbReference>
<dbReference type="InterPro" id="IPR049150">
    <property type="entry name" value="EFR3_HEAT-like_rpt"/>
</dbReference>
<dbReference type="PANTHER" id="PTHR47766">
    <property type="entry name" value="PROTEIN EFR3"/>
    <property type="match status" value="1"/>
</dbReference>
<dbReference type="PANTHER" id="PTHR47766:SF1">
    <property type="entry name" value="PROTEIN EFR3"/>
    <property type="match status" value="1"/>
</dbReference>
<dbReference type="Pfam" id="PF21072">
    <property type="entry name" value="EFR3"/>
    <property type="match status" value="1"/>
</dbReference>
<dbReference type="SUPFAM" id="SSF48371">
    <property type="entry name" value="ARM repeat"/>
    <property type="match status" value="1"/>
</dbReference>
<name>EFR3_SCHPO</name>
<comment type="similarity">
    <text evidence="2">Belongs to the EFR3 family.</text>
</comment>
<accession>O59817</accession>
<organism>
    <name type="scientific">Schizosaccharomyces pombe (strain 972 / ATCC 24843)</name>
    <name type="common">Fission yeast</name>
    <dbReference type="NCBI Taxonomy" id="284812"/>
    <lineage>
        <taxon>Eukaryota</taxon>
        <taxon>Fungi</taxon>
        <taxon>Dikarya</taxon>
        <taxon>Ascomycota</taxon>
        <taxon>Taphrinomycotina</taxon>
        <taxon>Schizosaccharomycetes</taxon>
        <taxon>Schizosaccharomycetales</taxon>
        <taxon>Schizosaccharomycetaceae</taxon>
        <taxon>Schizosaccharomyces</taxon>
    </lineage>
</organism>
<evidence type="ECO:0000269" key="1">
    <source>
    </source>
</evidence>
<evidence type="ECO:0000305" key="2"/>
<proteinExistence type="evidence at protein level"/>